<geneLocation type="plasmid">
    <name>pCD1</name>
</geneLocation>
<accession>P21207</accession>
<comment type="function">
    <text>Mediates the negative regulation of the lcrGVH operon by ATP or calcium. Acts as a modulator of the yop operon expression.</text>
</comment>
<comment type="similarity">
    <text evidence="1">Belongs to the LcrH/SycD chaperone family.</text>
</comment>
<keyword id="KW-0143">Chaperone</keyword>
<keyword id="KW-0614">Plasmid</keyword>
<keyword id="KW-1185">Reference proteome</keyword>
<organism>
    <name type="scientific">Yersinia pestis</name>
    <dbReference type="NCBI Taxonomy" id="632"/>
    <lineage>
        <taxon>Bacteria</taxon>
        <taxon>Pseudomonadati</taxon>
        <taxon>Pseudomonadota</taxon>
        <taxon>Gammaproteobacteria</taxon>
        <taxon>Enterobacterales</taxon>
        <taxon>Yersiniaceae</taxon>
        <taxon>Yersinia</taxon>
    </lineage>
</organism>
<reference key="1">
    <citation type="journal article" date="1989" name="J. Bacteriol.">
        <title>Molecular analysis of lcrGVH, the V antigen operon of Yersinia pestis.</title>
        <authorList>
            <person name="Price S.B."/>
            <person name="Leung K.Y."/>
            <person name="Barve S.S."/>
            <person name="Straley S.C."/>
        </authorList>
    </citation>
    <scope>NUCLEOTIDE SEQUENCE [GENOMIC DNA]</scope>
    <source>
        <strain>KIM5 / Biovar Mediaevalis</strain>
    </source>
</reference>
<reference key="2">
    <citation type="journal article" date="1998" name="Infect. Immun.">
        <title>DNA sequencing and analysis of the low-Ca2+-response plasmid pCD1 of Yersinia pestis KIM5.</title>
        <authorList>
            <person name="Perry R.D."/>
            <person name="Straley S.C."/>
            <person name="Fetherston J.D."/>
            <person name="Rose D.J."/>
            <person name="Gregor J."/>
            <person name="Blattner F.R."/>
        </authorList>
    </citation>
    <scope>NUCLEOTIDE SEQUENCE [GENOMIC DNA]</scope>
    <source>
        <strain>KIM5 / Biovar Mediaevalis</strain>
    </source>
</reference>
<reference key="3">
    <citation type="journal article" date="1998" name="J. Bacteriol.">
        <title>Structural organization of virulence-associated plasmids of Yersinia pestis.</title>
        <authorList>
            <person name="Hu P."/>
            <person name="Elliott J."/>
            <person name="McCready P."/>
            <person name="Skowronski E."/>
            <person name="Garnes J."/>
            <person name="Kobayashi A."/>
            <person name="Brubaker R.R."/>
            <person name="Garcia E."/>
        </authorList>
    </citation>
    <scope>NUCLEOTIDE SEQUENCE [GENOMIC DNA]</scope>
    <source>
        <strain>KIM5 / Biovar Mediaevalis</strain>
    </source>
</reference>
<reference key="4">
    <citation type="journal article" date="2001" name="Nature">
        <title>Genome sequence of Yersinia pestis, the causative agent of plague.</title>
        <authorList>
            <person name="Parkhill J."/>
            <person name="Wren B.W."/>
            <person name="Thomson N.R."/>
            <person name="Titball R.W."/>
            <person name="Holden M.T.G."/>
            <person name="Prentice M.B."/>
            <person name="Sebaihia M."/>
            <person name="James K.D."/>
            <person name="Churcher C.M."/>
            <person name="Mungall K.L."/>
            <person name="Baker S."/>
            <person name="Basham D."/>
            <person name="Bentley S.D."/>
            <person name="Brooks K."/>
            <person name="Cerdeno-Tarraga A.-M."/>
            <person name="Chillingworth T."/>
            <person name="Cronin A."/>
            <person name="Davies R.M."/>
            <person name="Davis P."/>
            <person name="Dougan G."/>
            <person name="Feltwell T."/>
            <person name="Hamlin N."/>
            <person name="Holroyd S."/>
            <person name="Jagels K."/>
            <person name="Karlyshev A.V."/>
            <person name="Leather S."/>
            <person name="Moule S."/>
            <person name="Oyston P.C.F."/>
            <person name="Quail M.A."/>
            <person name="Rutherford K.M."/>
            <person name="Simmonds M."/>
            <person name="Skelton J."/>
            <person name="Stevens K."/>
            <person name="Whitehead S."/>
            <person name="Barrell B.G."/>
        </authorList>
    </citation>
    <scope>NUCLEOTIDE SEQUENCE [LARGE SCALE GENOMIC DNA]</scope>
    <source>
        <strain>CO-92 / Biovar Orientalis</strain>
    </source>
</reference>
<reference key="5">
    <citation type="journal article" date="2004" name="DNA Res.">
        <title>Complete genome sequence of Yersinia pestis strain 91001, an isolate avirulent to humans.</title>
        <authorList>
            <person name="Song Y."/>
            <person name="Tong Z."/>
            <person name="Wang J."/>
            <person name="Wang L."/>
            <person name="Guo Z."/>
            <person name="Han Y."/>
            <person name="Zhang J."/>
            <person name="Pei D."/>
            <person name="Zhou D."/>
            <person name="Qin H."/>
            <person name="Pang X."/>
            <person name="Han Y."/>
            <person name="Zhai J."/>
            <person name="Li M."/>
            <person name="Cui B."/>
            <person name="Qi Z."/>
            <person name="Jin L."/>
            <person name="Dai R."/>
            <person name="Chen F."/>
            <person name="Li S."/>
            <person name="Ye C."/>
            <person name="Du Z."/>
            <person name="Lin W."/>
            <person name="Wang J."/>
            <person name="Yu J."/>
            <person name="Yang H."/>
            <person name="Wang J."/>
            <person name="Huang P."/>
            <person name="Yang R."/>
        </authorList>
    </citation>
    <scope>NUCLEOTIDE SEQUENCE [LARGE SCALE GENOMIC DNA]</scope>
    <source>
        <strain>91001 / Biovar Mediaevalis</strain>
    </source>
</reference>
<gene>
    <name type="primary">lcrH</name>
    <name type="synonym">sycD</name>
    <name type="ordered locus">YPCD1.30c</name>
    <name type="ordered locus">y5048</name>
    <name type="ordered locus">y0051</name>
    <name type="ordered locus">YP_pCD53</name>
</gene>
<sequence length="168" mass="19015">MQQETTDTQEYQLAMESFLKGGGTIAMLNEISSDTLEQLYSLAFNQYQSGKYEDAHKVFQALCVLDHYDSRFFLGLGACRQAMGQYDLAIHSYSYGAIMDIKEPRFPFHAAECLLQKGELAEAESGLFLAQELIADKTEFKELSTRVSSMLEAIKLKKEMEHECVDNP</sequence>
<feature type="chain" id="PRO_0000206485" description="Low calcium response locus protein H">
    <location>
        <begin position="1"/>
        <end position="168"/>
    </location>
</feature>
<dbReference type="EMBL" id="M26405">
    <property type="protein sequence ID" value="AAA27642.1"/>
    <property type="molecule type" value="Genomic_DNA"/>
</dbReference>
<dbReference type="EMBL" id="AF074612">
    <property type="protein sequence ID" value="AAC69800.1"/>
    <property type="molecule type" value="Genomic_DNA"/>
</dbReference>
<dbReference type="EMBL" id="AF053946">
    <property type="protein sequence ID" value="AAC62575.1"/>
    <property type="molecule type" value="Genomic_DNA"/>
</dbReference>
<dbReference type="EMBL" id="AL117189">
    <property type="protein sequence ID" value="CAB54907.1"/>
    <property type="molecule type" value="Genomic_DNA"/>
</dbReference>
<dbReference type="EMBL" id="AE017043">
    <property type="protein sequence ID" value="AAS58572.1"/>
    <property type="molecule type" value="Genomic_DNA"/>
</dbReference>
<dbReference type="PIR" id="C33601">
    <property type="entry name" value="C33601"/>
</dbReference>
<dbReference type="RefSeq" id="NP_395164.1">
    <property type="nucleotide sequence ID" value="NC_003131.1"/>
</dbReference>
<dbReference type="RefSeq" id="NP_857752.1">
    <property type="nucleotide sequence ID" value="NC_004836.1"/>
</dbReference>
<dbReference type="RefSeq" id="NP_857947.1">
    <property type="nucleotide sequence ID" value="NC_004839.1"/>
</dbReference>
<dbReference type="RefSeq" id="WP_002222758.1">
    <property type="nucleotide sequence ID" value="NZ_WUCM01000070.1"/>
</dbReference>
<dbReference type="SMR" id="P21207"/>
<dbReference type="PaxDb" id="214092-5832450"/>
<dbReference type="DNASU" id="1149311"/>
<dbReference type="EnsemblBacteria" id="AAS58572">
    <property type="protein sequence ID" value="AAS58572"/>
    <property type="gene ID" value="YP_pCD53"/>
</dbReference>
<dbReference type="KEGG" id="ype:YPCD1.30c"/>
<dbReference type="KEGG" id="ypm:YP_pCD53"/>
<dbReference type="PATRIC" id="fig|214092.21.peg.41"/>
<dbReference type="eggNOG" id="COG0457">
    <property type="taxonomic scope" value="Bacteria"/>
</dbReference>
<dbReference type="HOGENOM" id="CLU_093829_2_1_6"/>
<dbReference type="OMA" id="FHSAECH"/>
<dbReference type="OrthoDB" id="8591320at2"/>
<dbReference type="Proteomes" id="UP000000815">
    <property type="component" value="Plasmid pCD1"/>
</dbReference>
<dbReference type="Proteomes" id="UP000001019">
    <property type="component" value="Plasmid pCD1"/>
</dbReference>
<dbReference type="Gene3D" id="1.25.40.10">
    <property type="entry name" value="Tetratricopeptide repeat domain"/>
    <property type="match status" value="1"/>
</dbReference>
<dbReference type="InterPro" id="IPR005415">
    <property type="entry name" value="T3SS_Ca_resp_chp_LcrH/SycD"/>
</dbReference>
<dbReference type="InterPro" id="IPR016379">
    <property type="entry name" value="T3SS_Ca_resp_chp_LcrH/SycD_sub"/>
</dbReference>
<dbReference type="InterPro" id="IPR011716">
    <property type="entry name" value="TPR-3"/>
</dbReference>
<dbReference type="InterPro" id="IPR011990">
    <property type="entry name" value="TPR-like_helical_dom_sf"/>
</dbReference>
<dbReference type="NCBIfam" id="TIGR02552">
    <property type="entry name" value="LcrH_SycD"/>
    <property type="match status" value="1"/>
</dbReference>
<dbReference type="Pfam" id="PF07720">
    <property type="entry name" value="TPR_3"/>
    <property type="match status" value="1"/>
</dbReference>
<dbReference type="PIRSF" id="PIRSF003165">
    <property type="entry name" value="Chaperone_SicA"/>
    <property type="match status" value="1"/>
</dbReference>
<dbReference type="PRINTS" id="PR01595">
    <property type="entry name" value="SYCDCHAPRONE"/>
</dbReference>
<dbReference type="SUPFAM" id="SSF48452">
    <property type="entry name" value="TPR-like"/>
    <property type="match status" value="1"/>
</dbReference>
<dbReference type="PROSITE" id="PS50293">
    <property type="entry name" value="TPR_REGION"/>
    <property type="match status" value="1"/>
</dbReference>
<name>LCRH_YERPE</name>
<evidence type="ECO:0000305" key="1"/>
<proteinExistence type="inferred from homology"/>
<protein>
    <recommendedName>
        <fullName>Low calcium response locus protein H</fullName>
    </recommendedName>
</protein>